<comment type="function">
    <text evidence="2">With S4 and S5 plays an important role in translational accuracy.</text>
</comment>
<comment type="function">
    <text evidence="2">Interacts with and stabilizes bases of the 16S rRNA that are involved in tRNA selection in the A site and with the mRNA backbone. Located at the interface of the 30S and 50S subunits, it traverses the body of the 30S subunit contacting proteins on the other side and probably holding the rRNA structure together. The combined cluster of proteins S8, S12 and S17 appears to hold together the shoulder and platform of the 30S subunit.</text>
</comment>
<comment type="subunit">
    <text evidence="2">Part of the 30S ribosomal subunit. Contacts proteins S8 and S17. May interact with IF1 in the 30S initiation complex.</text>
</comment>
<comment type="similarity">
    <text evidence="2">Belongs to the universal ribosomal protein uS12 family.</text>
</comment>
<proteinExistence type="inferred from homology"/>
<evidence type="ECO:0000250" key="1"/>
<evidence type="ECO:0000255" key="2">
    <source>
        <dbReference type="HAMAP-Rule" id="MF_00403"/>
    </source>
</evidence>
<evidence type="ECO:0000256" key="3">
    <source>
        <dbReference type="SAM" id="MobiDB-lite"/>
    </source>
</evidence>
<evidence type="ECO:0000305" key="4"/>
<accession>P13576</accession>
<organism>
    <name type="scientific">Arthrospira platensis</name>
    <name type="common">Spirulina platensis</name>
    <dbReference type="NCBI Taxonomy" id="118562"/>
    <lineage>
        <taxon>Bacteria</taxon>
        <taxon>Bacillati</taxon>
        <taxon>Cyanobacteriota</taxon>
        <taxon>Cyanophyceae</taxon>
        <taxon>Oscillatoriophycideae</taxon>
        <taxon>Oscillatoriales</taxon>
        <taxon>Microcoleaceae</taxon>
        <taxon>Arthrospira</taxon>
    </lineage>
</organism>
<name>RS12_ARTPT</name>
<sequence length="124" mass="13836">MPTIQQLIRSAREKTDKKTKSPALKSCPQRRGVCTRVYTTTPKKPNSALRKVARVRLTSGFEVTAYIPGIGHNLQEHSVVMIRGGRVKDLPGVRYHIIRGTLDTAGVKDRRNGRSKYGAKRPKA</sequence>
<reference key="1">
    <citation type="journal article" date="1989" name="Mol. Gen. Genet.">
        <title>Characterization of the str operon genes from Spirulina platensis and their evolutionary relationship to those of other prokaryotes.</title>
        <authorList>
            <person name="Buttarelli F.R."/>
            <person name="Calogero R.A."/>
            <person name="Tiboni O."/>
            <person name="Gualerzi C.O."/>
            <person name="Pon C.L."/>
        </authorList>
    </citation>
    <scope>NUCLEOTIDE SEQUENCE [GENOMIC DNA]</scope>
</reference>
<keyword id="KW-0488">Methylation</keyword>
<keyword id="KW-0687">Ribonucleoprotein</keyword>
<keyword id="KW-0689">Ribosomal protein</keyword>
<keyword id="KW-0694">RNA-binding</keyword>
<keyword id="KW-0699">rRNA-binding</keyword>
<keyword id="KW-0820">tRNA-binding</keyword>
<dbReference type="EMBL" id="X15646">
    <property type="protein sequence ID" value="CAA33670.1"/>
    <property type="molecule type" value="Genomic_DNA"/>
</dbReference>
<dbReference type="PIR" id="S04388">
    <property type="entry name" value="R3SG12"/>
</dbReference>
<dbReference type="RefSeq" id="WP_006619092.1">
    <property type="nucleotide sequence ID" value="NZ_JBEVAD010000011.1"/>
</dbReference>
<dbReference type="SMR" id="P13576"/>
<dbReference type="OMA" id="VCIRVYT"/>
<dbReference type="GO" id="GO:0015935">
    <property type="term" value="C:small ribosomal subunit"/>
    <property type="evidence" value="ECO:0007669"/>
    <property type="project" value="InterPro"/>
</dbReference>
<dbReference type="GO" id="GO:0019843">
    <property type="term" value="F:rRNA binding"/>
    <property type="evidence" value="ECO:0007669"/>
    <property type="project" value="UniProtKB-UniRule"/>
</dbReference>
<dbReference type="GO" id="GO:0003735">
    <property type="term" value="F:structural constituent of ribosome"/>
    <property type="evidence" value="ECO:0007669"/>
    <property type="project" value="InterPro"/>
</dbReference>
<dbReference type="GO" id="GO:0000049">
    <property type="term" value="F:tRNA binding"/>
    <property type="evidence" value="ECO:0007669"/>
    <property type="project" value="UniProtKB-UniRule"/>
</dbReference>
<dbReference type="GO" id="GO:0006412">
    <property type="term" value="P:translation"/>
    <property type="evidence" value="ECO:0007669"/>
    <property type="project" value="UniProtKB-UniRule"/>
</dbReference>
<dbReference type="CDD" id="cd03368">
    <property type="entry name" value="Ribosomal_S12"/>
    <property type="match status" value="1"/>
</dbReference>
<dbReference type="FunFam" id="2.40.50.140:FF:000001">
    <property type="entry name" value="30S ribosomal protein S12"/>
    <property type="match status" value="1"/>
</dbReference>
<dbReference type="Gene3D" id="2.40.50.140">
    <property type="entry name" value="Nucleic acid-binding proteins"/>
    <property type="match status" value="1"/>
</dbReference>
<dbReference type="HAMAP" id="MF_00403_B">
    <property type="entry name" value="Ribosomal_uS12_B"/>
    <property type="match status" value="1"/>
</dbReference>
<dbReference type="InterPro" id="IPR012340">
    <property type="entry name" value="NA-bd_OB-fold"/>
</dbReference>
<dbReference type="InterPro" id="IPR006032">
    <property type="entry name" value="Ribosomal_uS12"/>
</dbReference>
<dbReference type="InterPro" id="IPR005679">
    <property type="entry name" value="Ribosomal_uS12_bac"/>
</dbReference>
<dbReference type="NCBIfam" id="TIGR00981">
    <property type="entry name" value="rpsL_bact"/>
    <property type="match status" value="1"/>
</dbReference>
<dbReference type="PANTHER" id="PTHR11652">
    <property type="entry name" value="30S RIBOSOMAL PROTEIN S12 FAMILY MEMBER"/>
    <property type="match status" value="1"/>
</dbReference>
<dbReference type="Pfam" id="PF00164">
    <property type="entry name" value="Ribosom_S12_S23"/>
    <property type="match status" value="1"/>
</dbReference>
<dbReference type="PIRSF" id="PIRSF002133">
    <property type="entry name" value="Ribosomal_S12/S23"/>
    <property type="match status" value="1"/>
</dbReference>
<dbReference type="PRINTS" id="PR01034">
    <property type="entry name" value="RIBOSOMALS12"/>
</dbReference>
<dbReference type="SUPFAM" id="SSF50249">
    <property type="entry name" value="Nucleic acid-binding proteins"/>
    <property type="match status" value="1"/>
</dbReference>
<dbReference type="PROSITE" id="PS00055">
    <property type="entry name" value="RIBOSOMAL_S12"/>
    <property type="match status" value="1"/>
</dbReference>
<protein>
    <recommendedName>
        <fullName evidence="2">Small ribosomal subunit protein uS12</fullName>
    </recommendedName>
    <alternativeName>
        <fullName evidence="4">30S ribosomal protein S12</fullName>
    </alternativeName>
</protein>
<gene>
    <name evidence="2" type="primary">rpsL</name>
    <name evidence="2" type="synonym">rps12</name>
</gene>
<feature type="chain" id="PRO_0000146307" description="Small ribosomal subunit protein uS12">
    <location>
        <begin position="1"/>
        <end position="124"/>
    </location>
</feature>
<feature type="region of interest" description="Disordered" evidence="3">
    <location>
        <begin position="8"/>
        <end position="28"/>
    </location>
</feature>
<feature type="compositionally biased region" description="Basic and acidic residues" evidence="3">
    <location>
        <begin position="10"/>
        <end position="19"/>
    </location>
</feature>
<feature type="modified residue" description="3-methylthioaspartic acid" evidence="1">
    <location>
        <position position="89"/>
    </location>
</feature>